<keyword id="KW-0217">Developmental protein</keyword>
<keyword id="KW-0238">DNA-binding</keyword>
<keyword id="KW-0371">Homeobox</keyword>
<keyword id="KW-0539">Nucleus</keyword>
<keyword id="KW-0597">Phosphoprotein</keyword>
<keyword id="KW-0804">Transcription</keyword>
<keyword id="KW-0805">Transcription regulation</keyword>
<name>HXD10_SAGLB</name>
<reference key="1">
    <citation type="submission" date="2006-08" db="EMBL/GenBank/DDBJ databases">
        <title>Positive selection in transcription factor genes on the human lineage.</title>
        <authorList>
            <person name="Nickel G.C."/>
            <person name="Tefft D.L."/>
            <person name="Trevarthen K."/>
            <person name="Funt J."/>
            <person name="Adams M.D."/>
        </authorList>
    </citation>
    <scope>NUCLEOTIDE SEQUENCE [GENOMIC DNA]</scope>
</reference>
<evidence type="ECO:0000250" key="1"/>
<evidence type="ECO:0000250" key="2">
    <source>
        <dbReference type="UniProtKB" id="P28359"/>
    </source>
</evidence>
<evidence type="ECO:0000255" key="3">
    <source>
        <dbReference type="PROSITE-ProRule" id="PRU00108"/>
    </source>
</evidence>
<evidence type="ECO:0000256" key="4">
    <source>
        <dbReference type="SAM" id="MobiDB-lite"/>
    </source>
</evidence>
<evidence type="ECO:0000305" key="5"/>
<dbReference type="EMBL" id="DQ977040">
    <property type="protein sequence ID" value="ABM47749.1"/>
    <property type="molecule type" value="Genomic_DNA"/>
</dbReference>
<dbReference type="GO" id="GO:0005634">
    <property type="term" value="C:nucleus"/>
    <property type="evidence" value="ECO:0007669"/>
    <property type="project" value="UniProtKB-SubCell"/>
</dbReference>
<dbReference type="GO" id="GO:0000981">
    <property type="term" value="F:DNA-binding transcription factor activity, RNA polymerase II-specific"/>
    <property type="evidence" value="ECO:0007669"/>
    <property type="project" value="InterPro"/>
</dbReference>
<dbReference type="GO" id="GO:0000978">
    <property type="term" value="F:RNA polymerase II cis-regulatory region sequence-specific DNA binding"/>
    <property type="evidence" value="ECO:0007669"/>
    <property type="project" value="TreeGrafter"/>
</dbReference>
<dbReference type="CDD" id="cd00086">
    <property type="entry name" value="homeodomain"/>
    <property type="match status" value="1"/>
</dbReference>
<dbReference type="FunFam" id="1.10.10.60:FF:000018">
    <property type="entry name" value="Homeobox A10"/>
    <property type="match status" value="1"/>
</dbReference>
<dbReference type="Gene3D" id="1.10.10.60">
    <property type="entry name" value="Homeodomain-like"/>
    <property type="match status" value="1"/>
</dbReference>
<dbReference type="InterPro" id="IPR001356">
    <property type="entry name" value="HD"/>
</dbReference>
<dbReference type="InterPro" id="IPR020479">
    <property type="entry name" value="HD_metazoa"/>
</dbReference>
<dbReference type="InterPro" id="IPR017970">
    <property type="entry name" value="Homeobox_CS"/>
</dbReference>
<dbReference type="InterPro" id="IPR009057">
    <property type="entry name" value="Homeodomain-like_sf"/>
</dbReference>
<dbReference type="InterPro" id="IPR046333">
    <property type="entry name" value="HXA10/ABDB-like"/>
</dbReference>
<dbReference type="PANTHER" id="PTHR45874">
    <property type="entry name" value="HOMEOBOX PROTEIN ABDOMINAL-B"/>
    <property type="match status" value="1"/>
</dbReference>
<dbReference type="PANTHER" id="PTHR45874:SF5">
    <property type="entry name" value="HOMEOBOX PROTEIN HOX-D10"/>
    <property type="match status" value="1"/>
</dbReference>
<dbReference type="Pfam" id="PF00046">
    <property type="entry name" value="Homeodomain"/>
    <property type="match status" value="1"/>
</dbReference>
<dbReference type="PRINTS" id="PR00024">
    <property type="entry name" value="HOMEOBOX"/>
</dbReference>
<dbReference type="SMART" id="SM00389">
    <property type="entry name" value="HOX"/>
    <property type="match status" value="1"/>
</dbReference>
<dbReference type="SUPFAM" id="SSF46689">
    <property type="entry name" value="Homeodomain-like"/>
    <property type="match status" value="1"/>
</dbReference>
<dbReference type="PROSITE" id="PS00027">
    <property type="entry name" value="HOMEOBOX_1"/>
    <property type="match status" value="1"/>
</dbReference>
<dbReference type="PROSITE" id="PS50071">
    <property type="entry name" value="HOMEOBOX_2"/>
    <property type="match status" value="1"/>
</dbReference>
<comment type="function">
    <text evidence="1">Sequence-specific transcription factor which is part of a developmental regulatory system that provides cells with specific positional identities on the anterior-posterior axis.</text>
</comment>
<comment type="subcellular location">
    <subcellularLocation>
        <location evidence="3">Nucleus</location>
    </subcellularLocation>
</comment>
<comment type="similarity">
    <text evidence="5">Belongs to the Abd-B homeobox family.</text>
</comment>
<gene>
    <name type="primary">HOXD10</name>
</gene>
<accession>A1YFT7</accession>
<feature type="chain" id="PRO_0000285441" description="Homeobox protein Hox-D10">
    <location>
        <begin position="1"/>
        <end position="340"/>
    </location>
</feature>
<feature type="DNA-binding region" description="Homeobox" evidence="3">
    <location>
        <begin position="266"/>
        <end position="325"/>
    </location>
</feature>
<feature type="region of interest" description="Disordered" evidence="4">
    <location>
        <begin position="202"/>
        <end position="268"/>
    </location>
</feature>
<feature type="compositionally biased region" description="Polar residues" evidence="4">
    <location>
        <begin position="208"/>
        <end position="217"/>
    </location>
</feature>
<feature type="compositionally biased region" description="Basic and acidic residues" evidence="4">
    <location>
        <begin position="242"/>
        <end position="253"/>
    </location>
</feature>
<feature type="modified residue" description="Phosphoserine" evidence="2">
    <location>
        <position position="238"/>
    </location>
</feature>
<feature type="modified residue" description="Phosphoserine" evidence="2">
    <location>
        <position position="239"/>
    </location>
</feature>
<sequence length="340" mass="38444">MSFPNSSPAANTFLVDSLISACRSDSFYSSSASMYMPPPSADMGTYGMQTCGLLPSLAKREVNHQNMGMNVHPYIPQVDSWTDPNRSCRIEQPVTQQVPTCSFTTNIKEESNCCMYSDKRNKLISAEVPSYQRLVPEPCPVENPEVPVPGYFRLSQTYATGKTQEYNNSPEGSSTVMLQLNPRGAAKPQLSAAQLQMEKKMNEPANGQEPTKVSQVESPEAKGGLPEERSCLAEVSVSSPEVQEKESKEEIKSDTPTSNWLTAKSGRKKRCPYTKHQTLELEKEFLFNMYLTRERRLEISKSVNLTDRQVKIWFQNRRMKLKKMSRENRIRELTANLTFX</sequence>
<proteinExistence type="inferred from homology"/>
<protein>
    <recommendedName>
        <fullName>Homeobox protein Hox-D10</fullName>
    </recommendedName>
</protein>
<organism>
    <name type="scientific">Saguinus labiatus</name>
    <name type="common">Red-chested mustached tamarin</name>
    <dbReference type="NCBI Taxonomy" id="78454"/>
    <lineage>
        <taxon>Eukaryota</taxon>
        <taxon>Metazoa</taxon>
        <taxon>Chordata</taxon>
        <taxon>Craniata</taxon>
        <taxon>Vertebrata</taxon>
        <taxon>Euteleostomi</taxon>
        <taxon>Mammalia</taxon>
        <taxon>Eutheria</taxon>
        <taxon>Euarchontoglires</taxon>
        <taxon>Primates</taxon>
        <taxon>Haplorrhini</taxon>
        <taxon>Platyrrhini</taxon>
        <taxon>Cebidae</taxon>
        <taxon>Callitrichinae</taxon>
        <taxon>Saguinus</taxon>
    </lineage>
</organism>